<protein>
    <recommendedName>
        <fullName evidence="1">Orotidine 5'-phosphate decarboxylase</fullName>
        <ecNumber evidence="1">4.1.1.23</ecNumber>
    </recommendedName>
    <alternativeName>
        <fullName evidence="1">OMP decarboxylase</fullName>
        <shortName evidence="1">OMPDCase</shortName>
        <shortName evidence="1">OMPdecase</shortName>
    </alternativeName>
</protein>
<dbReference type="EC" id="4.1.1.23" evidence="1"/>
<dbReference type="EMBL" id="CP000230">
    <property type="protein sequence ID" value="ABC24218.1"/>
    <property type="molecule type" value="Genomic_DNA"/>
</dbReference>
<dbReference type="RefSeq" id="WP_011391171.1">
    <property type="nucleotide sequence ID" value="NC_007643.1"/>
</dbReference>
<dbReference type="RefSeq" id="YP_428505.1">
    <property type="nucleotide sequence ID" value="NC_007643.1"/>
</dbReference>
<dbReference type="SMR" id="Q2RNS7"/>
<dbReference type="STRING" id="269796.Rru_A3424"/>
<dbReference type="EnsemblBacteria" id="ABC24218">
    <property type="protein sequence ID" value="ABC24218"/>
    <property type="gene ID" value="Rru_A3424"/>
</dbReference>
<dbReference type="KEGG" id="rru:Rru_A3424"/>
<dbReference type="PATRIC" id="fig|269796.9.peg.3540"/>
<dbReference type="eggNOG" id="COG0284">
    <property type="taxonomic scope" value="Bacteria"/>
</dbReference>
<dbReference type="HOGENOM" id="CLU_067069_0_0_5"/>
<dbReference type="PhylomeDB" id="Q2RNS7"/>
<dbReference type="UniPathway" id="UPA00070">
    <property type="reaction ID" value="UER00120"/>
</dbReference>
<dbReference type="Proteomes" id="UP000001929">
    <property type="component" value="Chromosome"/>
</dbReference>
<dbReference type="GO" id="GO:0005829">
    <property type="term" value="C:cytosol"/>
    <property type="evidence" value="ECO:0007669"/>
    <property type="project" value="TreeGrafter"/>
</dbReference>
<dbReference type="GO" id="GO:0004590">
    <property type="term" value="F:orotidine-5'-phosphate decarboxylase activity"/>
    <property type="evidence" value="ECO:0007669"/>
    <property type="project" value="UniProtKB-UniRule"/>
</dbReference>
<dbReference type="GO" id="GO:0006207">
    <property type="term" value="P:'de novo' pyrimidine nucleobase biosynthetic process"/>
    <property type="evidence" value="ECO:0007669"/>
    <property type="project" value="InterPro"/>
</dbReference>
<dbReference type="GO" id="GO:0044205">
    <property type="term" value="P:'de novo' UMP biosynthetic process"/>
    <property type="evidence" value="ECO:0007669"/>
    <property type="project" value="UniProtKB-UniRule"/>
</dbReference>
<dbReference type="CDD" id="cd04725">
    <property type="entry name" value="OMP_decarboxylase_like"/>
    <property type="match status" value="1"/>
</dbReference>
<dbReference type="Gene3D" id="3.20.20.70">
    <property type="entry name" value="Aldolase class I"/>
    <property type="match status" value="1"/>
</dbReference>
<dbReference type="HAMAP" id="MF_01200_B">
    <property type="entry name" value="OMPdecase_type1_B"/>
    <property type="match status" value="1"/>
</dbReference>
<dbReference type="InterPro" id="IPR013785">
    <property type="entry name" value="Aldolase_TIM"/>
</dbReference>
<dbReference type="InterPro" id="IPR014732">
    <property type="entry name" value="OMPdecase"/>
</dbReference>
<dbReference type="InterPro" id="IPR018089">
    <property type="entry name" value="OMPdecase_AS"/>
</dbReference>
<dbReference type="InterPro" id="IPR047596">
    <property type="entry name" value="OMPdecase_bac"/>
</dbReference>
<dbReference type="InterPro" id="IPR001754">
    <property type="entry name" value="OMPdeCOase_dom"/>
</dbReference>
<dbReference type="InterPro" id="IPR011060">
    <property type="entry name" value="RibuloseP-bd_barrel"/>
</dbReference>
<dbReference type="NCBIfam" id="NF001273">
    <property type="entry name" value="PRK00230.1"/>
    <property type="match status" value="1"/>
</dbReference>
<dbReference type="NCBIfam" id="TIGR01740">
    <property type="entry name" value="pyrF"/>
    <property type="match status" value="1"/>
</dbReference>
<dbReference type="PANTHER" id="PTHR32119">
    <property type="entry name" value="OROTIDINE 5'-PHOSPHATE DECARBOXYLASE"/>
    <property type="match status" value="1"/>
</dbReference>
<dbReference type="PANTHER" id="PTHR32119:SF2">
    <property type="entry name" value="OROTIDINE 5'-PHOSPHATE DECARBOXYLASE"/>
    <property type="match status" value="1"/>
</dbReference>
<dbReference type="Pfam" id="PF00215">
    <property type="entry name" value="OMPdecase"/>
    <property type="match status" value="1"/>
</dbReference>
<dbReference type="SMART" id="SM00934">
    <property type="entry name" value="OMPdecase"/>
    <property type="match status" value="1"/>
</dbReference>
<dbReference type="SUPFAM" id="SSF51366">
    <property type="entry name" value="Ribulose-phoshate binding barrel"/>
    <property type="match status" value="1"/>
</dbReference>
<dbReference type="PROSITE" id="PS00156">
    <property type="entry name" value="OMPDECASE"/>
    <property type="match status" value="1"/>
</dbReference>
<organism>
    <name type="scientific">Rhodospirillum rubrum (strain ATCC 11170 / ATH 1.1.1 / DSM 467 / LMG 4362 / NCIMB 8255 / S1)</name>
    <dbReference type="NCBI Taxonomy" id="269796"/>
    <lineage>
        <taxon>Bacteria</taxon>
        <taxon>Pseudomonadati</taxon>
        <taxon>Pseudomonadota</taxon>
        <taxon>Alphaproteobacteria</taxon>
        <taxon>Rhodospirillales</taxon>
        <taxon>Rhodospirillaceae</taxon>
        <taxon>Rhodospirillum</taxon>
    </lineage>
</organism>
<feature type="chain" id="PRO_0000241901" description="Orotidine 5'-phosphate decarboxylase">
    <location>
        <begin position="1"/>
        <end position="247"/>
    </location>
</feature>
<feature type="active site" description="Proton donor" evidence="1">
    <location>
        <position position="68"/>
    </location>
</feature>
<feature type="binding site" evidence="1">
    <location>
        <position position="16"/>
    </location>
    <ligand>
        <name>substrate</name>
    </ligand>
</feature>
<feature type="binding site" evidence="1">
    <location>
        <position position="38"/>
    </location>
    <ligand>
        <name>substrate</name>
    </ligand>
</feature>
<feature type="binding site" evidence="1">
    <location>
        <begin position="66"/>
        <end position="75"/>
    </location>
    <ligand>
        <name>substrate</name>
    </ligand>
</feature>
<feature type="binding site" evidence="1">
    <location>
        <position position="130"/>
    </location>
    <ligand>
        <name>substrate</name>
    </ligand>
</feature>
<feature type="binding site" evidence="1">
    <location>
        <position position="191"/>
    </location>
    <ligand>
        <name>substrate</name>
    </ligand>
</feature>
<feature type="binding site" evidence="1">
    <location>
        <position position="200"/>
    </location>
    <ligand>
        <name>substrate</name>
    </ligand>
</feature>
<feature type="binding site" evidence="1">
    <location>
        <position position="220"/>
    </location>
    <ligand>
        <name>substrate</name>
    </ligand>
</feature>
<feature type="binding site" evidence="1">
    <location>
        <position position="221"/>
    </location>
    <ligand>
        <name>substrate</name>
    </ligand>
</feature>
<sequence>MPMAQMTQNPVFVAIDTTVVGDATTLAARLHDEVGGIKLGLEFFARNGHKGVKEVCRAGALPLFLDLKFHDIPNTVAGAVRAVMPLAPALLNVHACGGRAMMIAAREAAQSEALALGIAPPKMIAVTVLTSMDDDDLGGTGVAGGVLDQVRRLAALTRDAGLDGVVCSAREARVLRADLGDDFLLVTPGVRPLWSTTNDQKRVVTPQEAMAEGADVLVIGRPITGATDPAQAARLIAGEIVGWDVGI</sequence>
<name>PYRF_RHORT</name>
<proteinExistence type="inferred from homology"/>
<gene>
    <name evidence="1" type="primary">pyrF</name>
    <name type="ordered locus">Rru_A3424</name>
</gene>
<reference key="1">
    <citation type="journal article" date="2011" name="Stand. Genomic Sci.">
        <title>Complete genome sequence of Rhodospirillum rubrum type strain (S1).</title>
        <authorList>
            <person name="Munk A.C."/>
            <person name="Copeland A."/>
            <person name="Lucas S."/>
            <person name="Lapidus A."/>
            <person name="Del Rio T.G."/>
            <person name="Barry K."/>
            <person name="Detter J.C."/>
            <person name="Hammon N."/>
            <person name="Israni S."/>
            <person name="Pitluck S."/>
            <person name="Brettin T."/>
            <person name="Bruce D."/>
            <person name="Han C."/>
            <person name="Tapia R."/>
            <person name="Gilna P."/>
            <person name="Schmutz J."/>
            <person name="Larimer F."/>
            <person name="Land M."/>
            <person name="Kyrpides N.C."/>
            <person name="Mavromatis K."/>
            <person name="Richardson P."/>
            <person name="Rohde M."/>
            <person name="Goeker M."/>
            <person name="Klenk H.P."/>
            <person name="Zhang Y."/>
            <person name="Roberts G.P."/>
            <person name="Reslewic S."/>
            <person name="Schwartz D.C."/>
        </authorList>
    </citation>
    <scope>NUCLEOTIDE SEQUENCE [LARGE SCALE GENOMIC DNA]</scope>
    <source>
        <strain>ATCC 11170 / ATH 1.1.1 / DSM 467 / LMG 4362 / NCIMB 8255 / S1</strain>
    </source>
</reference>
<keyword id="KW-0210">Decarboxylase</keyword>
<keyword id="KW-0456">Lyase</keyword>
<keyword id="KW-0665">Pyrimidine biosynthesis</keyword>
<keyword id="KW-1185">Reference proteome</keyword>
<evidence type="ECO:0000255" key="1">
    <source>
        <dbReference type="HAMAP-Rule" id="MF_01200"/>
    </source>
</evidence>
<accession>Q2RNS7</accession>
<comment type="function">
    <text evidence="1">Catalyzes the decarboxylation of orotidine 5'-monophosphate (OMP) to uridine 5'-monophosphate (UMP).</text>
</comment>
<comment type="catalytic activity">
    <reaction evidence="1">
        <text>orotidine 5'-phosphate + H(+) = UMP + CO2</text>
        <dbReference type="Rhea" id="RHEA:11596"/>
        <dbReference type="ChEBI" id="CHEBI:15378"/>
        <dbReference type="ChEBI" id="CHEBI:16526"/>
        <dbReference type="ChEBI" id="CHEBI:57538"/>
        <dbReference type="ChEBI" id="CHEBI:57865"/>
        <dbReference type="EC" id="4.1.1.23"/>
    </reaction>
</comment>
<comment type="pathway">
    <text evidence="1">Pyrimidine metabolism; UMP biosynthesis via de novo pathway; UMP from orotate: step 2/2.</text>
</comment>
<comment type="subunit">
    <text evidence="1">Homodimer.</text>
</comment>
<comment type="similarity">
    <text evidence="1">Belongs to the OMP decarboxylase family. Type 1 subfamily.</text>
</comment>